<feature type="chain" id="PRO_0000053482" description="Peroxisome proliferator-activated receptor alpha">
    <location>
        <begin position="1"/>
        <end position="468"/>
    </location>
</feature>
<feature type="domain" description="NR LBD" evidence="5">
    <location>
        <begin position="239"/>
        <end position="466"/>
    </location>
</feature>
<feature type="DNA-binding region" description="Nuclear receptor" evidence="4">
    <location>
        <begin position="99"/>
        <end position="173"/>
    </location>
</feature>
<feature type="zinc finger region" description="NR C4-type" evidence="4">
    <location>
        <begin position="102"/>
        <end position="122"/>
    </location>
</feature>
<feature type="zinc finger region" description="NR C4-type" evidence="4">
    <location>
        <begin position="139"/>
        <end position="161"/>
    </location>
</feature>
<feature type="region of interest" description="Required for heterodimerization with RXRA" evidence="1">
    <location>
        <begin position="304"/>
        <end position="433"/>
    </location>
</feature>
<feature type="site" description="Essential for heterodimerization with RXRA" evidence="1">
    <location>
        <position position="433"/>
    </location>
</feature>
<feature type="mutagenesis site" description="Reduces DNA binding and strongly decreases transcriptional activation; when associated with A-122." evidence="10">
    <original>C</original>
    <variation>A</variation>
    <location>
        <position position="119"/>
    </location>
</feature>
<feature type="mutagenesis site" description="Reduces DNA binding and strongly decreases transcriptional activation; when associated with A-119." evidence="10">
    <original>C</original>
    <variation>A</variation>
    <location>
        <position position="122"/>
    </location>
</feature>
<feature type="mutagenesis site" description="No effect on interaction with PER2." evidence="11">
    <original>K</original>
    <variation>A</variation>
    <location>
        <position position="292"/>
    </location>
</feature>
<feature type="mutagenesis site" description="Slightly reduces interaction with PER2." evidence="11">
    <location>
        <begin position="459"/>
        <end position="468"/>
    </location>
</feature>
<feature type="sequence conflict" description="In Ref. 1; CAA40856." evidence="16" ref="1">
    <original>A</original>
    <variation>R</variation>
    <location>
        <position position="75"/>
    </location>
</feature>
<proteinExistence type="evidence at protein level"/>
<name>PPARA_MOUSE</name>
<accession>P23204</accession>
<gene>
    <name type="primary">Ppara</name>
    <name type="synonym">Nr1c1</name>
    <name type="synonym">Ppar</name>
</gene>
<reference key="1">
    <citation type="journal article" date="1990" name="Nature">
        <title>Activation of a member of the steroid hormone receptor superfamily by peroxisome proliferators.</title>
        <authorList>
            <person name="Issemann I."/>
            <person name="Green S."/>
        </authorList>
    </citation>
    <scope>NUCLEOTIDE SEQUENCE [MRNA]</scope>
</reference>
<reference key="2">
    <citation type="journal article" date="1994" name="Biochem. Biophys. Res. Commun.">
        <title>Structure of the mouse peroxisome proliferator activated receptor alpha gene.</title>
        <authorList>
            <person name="Gearing K.L."/>
            <person name="Crickmore A."/>
            <person name="Gustafsson J.-A."/>
        </authorList>
    </citation>
    <scope>NUCLEOTIDE SEQUENCE [GENOMIC DNA]</scope>
    <source>
        <strain>129/Sv</strain>
    </source>
</reference>
<reference key="3">
    <citation type="journal article" date="2004" name="Genome Res.">
        <title>The status, quality, and expansion of the NIH full-length cDNA project: the Mammalian Gene Collection (MGC).</title>
        <authorList>
            <consortium name="The MGC Project Team"/>
        </authorList>
    </citation>
    <scope>NUCLEOTIDE SEQUENCE [LARGE SCALE MRNA]</scope>
    <source>
        <strain>FVB/N</strain>
        <tissue>Kidney</tissue>
    </source>
</reference>
<reference key="4">
    <citation type="journal article" date="1995" name="Eur. J. Biochem.">
        <title>Chromosomal localisation, inducibility, tissue-specific expression and strain differences in three murine peroxisome-proliferator-activated-receptor genes.</title>
        <authorList>
            <person name="Jones P.S."/>
            <person name="Savory R."/>
            <person name="Barratt P."/>
            <person name="Bell A.R."/>
            <person name="Gray T.J.B."/>
            <person name="Jenkins N.A."/>
            <person name="Gilbert D.J."/>
            <person name="Copeland N.G."/>
            <person name="Bell D.R."/>
        </authorList>
    </citation>
    <scope>NUCLEOTIDE SEQUENCE [MRNA] OF 413-468</scope>
    <source>
        <strain>Swiss Webster</strain>
        <tissue>Liver</tissue>
    </source>
</reference>
<reference key="5">
    <citation type="journal article" date="1997" name="J. Biol. Chem.">
        <title>Isolation and characterization of PBP, a protein that interacts with peroxisome proliferator-activated receptor.</title>
        <authorList>
            <person name="Zhu Y."/>
            <person name="Qi C."/>
            <person name="Jain S."/>
            <person name="Rao M.S."/>
            <person name="Reddy J.K."/>
        </authorList>
    </citation>
    <scope>INTERACTION WITH PPARBP</scope>
</reference>
<reference key="6">
    <citation type="journal article" date="1998" name="Oncogene">
        <title>Characterization of Brx, a novel Dbl family member that modulates estrogen receptor action.</title>
        <authorList>
            <person name="Rubino D."/>
            <person name="Driggers P."/>
            <person name="Arbit D."/>
            <person name="Kemp L."/>
            <person name="Miller B."/>
            <person name="Coso O."/>
            <person name="Pagliai K."/>
            <person name="Gray K."/>
            <person name="Gutkind S."/>
            <person name="Segars J."/>
        </authorList>
    </citation>
    <scope>INTERACTION WITH AKAP13</scope>
</reference>
<reference key="7">
    <citation type="journal article" date="2000" name="J. Biol. Chem.">
        <title>Isolation and characterization of peroxisome proliferator-activated receptor (PPAR) interacting protein (PRIP) as a coactivator for PPAR.</title>
        <authorList>
            <person name="Zhu Y.-J."/>
            <person name="Kan L."/>
            <person name="Qi C."/>
            <person name="Kanwar Y.S."/>
            <person name="Yeldandi A.V."/>
            <person name="Rao M.S."/>
            <person name="Reddy J.K."/>
        </authorList>
    </citation>
    <scope>INTERACTION WITH NCOA6</scope>
</reference>
<reference key="8">
    <citation type="journal article" date="2003" name="Nature">
        <title>Oleylethanolamide regulates feeding and body weight through activation of the nuclear receptor PPAR-alpha.</title>
        <authorList>
            <person name="Fu J."/>
            <person name="Gaetani S."/>
            <person name="Oveisi F."/>
            <person name="Lo Verme J."/>
            <person name="Serrano A."/>
            <person name="Rodriguez De Fonseca F."/>
            <person name="Rosengarth A."/>
            <person name="Luecke H."/>
            <person name="Di Giacomo B."/>
            <person name="Tarzia G."/>
            <person name="Piomelli D."/>
        </authorList>
    </citation>
    <scope>IDENTIFICATION AS RECEPTOR FOR OLEYLETHANOLAMIDE</scope>
    <scope>FUNCTION</scope>
</reference>
<reference key="9">
    <citation type="journal article" date="2006" name="Cell Metab.">
        <title>Lipin 1 is an inducible amplifier of the hepatic PGC-1alpha/PPARalpha regulatory pathway.</title>
        <authorList>
            <person name="Finck B.N."/>
            <person name="Gropler M.C."/>
            <person name="Chen Z."/>
            <person name="Leone T.C."/>
            <person name="Croce M.A."/>
            <person name="Harris T.E."/>
            <person name="Lawrence J.C. Jr."/>
            <person name="Kelly D.P."/>
        </authorList>
    </citation>
    <scope>INTERACTION WITH LIPN1</scope>
</reference>
<reference key="10">
    <citation type="journal article" date="2008" name="Nature">
        <title>PRDM16 controls a brown fat/skeletal muscle switch.</title>
        <authorList>
            <person name="Seale P."/>
            <person name="Bjork B."/>
            <person name="Yang W."/>
            <person name="Kajimura S."/>
            <person name="Chin S."/>
            <person name="Kuang S."/>
            <person name="Scime A."/>
            <person name="Devarakonda S."/>
            <person name="Conroe H.M."/>
            <person name="Erdjument-Bromage H."/>
            <person name="Tempst P."/>
            <person name="Rudnicki M.A."/>
            <person name="Beier D.R."/>
            <person name="Spiegelman B.M."/>
        </authorList>
    </citation>
    <scope>INTERACTION WITH PRDM16</scope>
</reference>
<reference key="11">
    <citation type="journal article" date="2009" name="Cell">
        <title>Identification of a physiologically relevant endogenous ligand for PPARalpha in liver.</title>
        <authorList>
            <person name="Chakravarthy M.V."/>
            <person name="Lodhi I.J."/>
            <person name="Yin L."/>
            <person name="Malapaka R.R."/>
            <person name="Xu H.E."/>
            <person name="Turk J."/>
            <person name="Semenkovich C.F."/>
        </authorList>
    </citation>
    <scope>IDENTIFICATION OF 1-PALMITOYL-2-OLEOYL-SN-GLYCEROL-3-PHOSPHOCHOLINE AS A PHYSIOLOGICAL LIGAND</scope>
    <scope>DNA-BINDING</scope>
    <scope>FUNCTION</scope>
    <scope>MUTAGENESIS OF CYS-119 AND CYS-122</scope>
</reference>
<reference key="12">
    <citation type="journal article" date="2010" name="Genes Dev.">
        <title>The mammalian clock component PERIOD2 coordinates circadian output by interaction with nuclear receptors.</title>
        <authorList>
            <person name="Schmutz I."/>
            <person name="Ripperger J.A."/>
            <person name="Baeriswyl-Aebischer S."/>
            <person name="Albrecht U."/>
        </authorList>
    </citation>
    <scope>FUNCTION IN CIRCADIAN RHYTHMS</scope>
    <scope>INTERACTION WITH PER2</scope>
    <scope>SUBCELLULAR LOCATION</scope>
    <scope>MUTAGENESIS OF LYS-292 AND 459-LEU--TYR-468</scope>
</reference>
<reference key="13">
    <citation type="journal article" date="2017" name="Cell Metab.">
        <title>CRY1/2 selectively repress PPARdelta and limit exercise capacity.</title>
        <authorList>
            <person name="Jordan S.D."/>
            <person name="Kriebs A."/>
            <person name="Vaughan M."/>
            <person name="Duglan D."/>
            <person name="Fan W."/>
            <person name="Henriksson E."/>
            <person name="Huber A.L."/>
            <person name="Papp S.J."/>
            <person name="Nguyen M."/>
            <person name="Afetian M."/>
            <person name="Downes M."/>
            <person name="Yu R.T."/>
            <person name="Kralli A."/>
            <person name="Evans R.M."/>
            <person name="Lamia K.A."/>
        </authorList>
    </citation>
    <scope>INTERACTION WITH CRY1 AND CRY2</scope>
</reference>
<reference key="14">
    <citation type="journal article" date="2018" name="Hepatology">
        <title>Hepatic PPARalpha function is controlled by polyubiquitination and proteasome-mediated degradation through the coordinated actions of PAQR3 and HUWE1.</title>
        <authorList>
            <person name="Zhao Z."/>
            <person name="Xu D."/>
            <person name="Wang Z."/>
            <person name="Wang L."/>
            <person name="Han R."/>
            <person name="Wang Z."/>
            <person name="Liao L."/>
            <person name="Chen Y."/>
        </authorList>
    </citation>
    <scope>INTERACTION WITH PAQR3 AND HUWE1</scope>
    <scope>UBIQUITINATION</scope>
</reference>
<evidence type="ECO:0000250" key="1"/>
<evidence type="ECO:0000250" key="2">
    <source>
        <dbReference type="UniProtKB" id="P37230"/>
    </source>
</evidence>
<evidence type="ECO:0000250" key="3">
    <source>
        <dbReference type="UniProtKB" id="Q07869"/>
    </source>
</evidence>
<evidence type="ECO:0000255" key="4">
    <source>
        <dbReference type="PROSITE-ProRule" id="PRU00407"/>
    </source>
</evidence>
<evidence type="ECO:0000255" key="5">
    <source>
        <dbReference type="PROSITE-ProRule" id="PRU01189"/>
    </source>
</evidence>
<evidence type="ECO:0000269" key="6">
    <source>
    </source>
</evidence>
<evidence type="ECO:0000269" key="7">
    <source>
    </source>
</evidence>
<evidence type="ECO:0000269" key="8">
    <source>
    </source>
</evidence>
<evidence type="ECO:0000269" key="9">
    <source>
    </source>
</evidence>
<evidence type="ECO:0000269" key="10">
    <source>
    </source>
</evidence>
<evidence type="ECO:0000269" key="11">
    <source>
    </source>
</evidence>
<evidence type="ECO:0000269" key="12">
    <source>
    </source>
</evidence>
<evidence type="ECO:0000269" key="13">
    <source>
    </source>
</evidence>
<evidence type="ECO:0000269" key="14">
    <source>
    </source>
</evidence>
<evidence type="ECO:0000269" key="15">
    <source>
    </source>
</evidence>
<evidence type="ECO:0000305" key="16"/>
<dbReference type="EMBL" id="X57638">
    <property type="protein sequence ID" value="CAA40856.1"/>
    <property type="molecule type" value="mRNA"/>
</dbReference>
<dbReference type="EMBL" id="X75289">
    <property type="protein sequence ID" value="CAA53042.1"/>
    <property type="molecule type" value="Genomic_DNA"/>
</dbReference>
<dbReference type="EMBL" id="X75290">
    <property type="protein sequence ID" value="CAA53042.1"/>
    <property type="status" value="JOINED"/>
    <property type="molecule type" value="Genomic_DNA"/>
</dbReference>
<dbReference type="EMBL" id="X75291">
    <property type="protein sequence ID" value="CAA53042.1"/>
    <property type="status" value="JOINED"/>
    <property type="molecule type" value="Genomic_DNA"/>
</dbReference>
<dbReference type="EMBL" id="X75292">
    <property type="protein sequence ID" value="CAA53042.1"/>
    <property type="status" value="JOINED"/>
    <property type="molecule type" value="Genomic_DNA"/>
</dbReference>
<dbReference type="EMBL" id="X75293">
    <property type="protein sequence ID" value="CAA53042.1"/>
    <property type="status" value="JOINED"/>
    <property type="molecule type" value="Genomic_DNA"/>
</dbReference>
<dbReference type="EMBL" id="X75294">
    <property type="protein sequence ID" value="CAA53042.1"/>
    <property type="status" value="JOINED"/>
    <property type="molecule type" value="Genomic_DNA"/>
</dbReference>
<dbReference type="EMBL" id="BC016892">
    <property type="protein sequence ID" value="AAH16892.1"/>
    <property type="molecule type" value="mRNA"/>
</dbReference>
<dbReference type="EMBL" id="X89577">
    <property type="protein sequence ID" value="CAA61754.1"/>
    <property type="molecule type" value="mRNA"/>
</dbReference>
<dbReference type="CCDS" id="CCDS27721.1"/>
<dbReference type="PIR" id="JC2085">
    <property type="entry name" value="JC2085"/>
</dbReference>
<dbReference type="RefSeq" id="NP_001106889.1">
    <property type="nucleotide sequence ID" value="NM_001113418.1"/>
</dbReference>
<dbReference type="RefSeq" id="NP_035274.2">
    <property type="nucleotide sequence ID" value="NM_011144.6"/>
</dbReference>
<dbReference type="RefSeq" id="XP_006520682.1">
    <property type="nucleotide sequence ID" value="XM_006520619.3"/>
</dbReference>
<dbReference type="RefSeq" id="XP_006520683.1">
    <property type="nucleotide sequence ID" value="XM_006520620.5"/>
</dbReference>
<dbReference type="RefSeq" id="XP_006520684.1">
    <property type="nucleotide sequence ID" value="XM_006520621.5"/>
</dbReference>
<dbReference type="RefSeq" id="XP_006520685.1">
    <property type="nucleotide sequence ID" value="XM_006520622.5"/>
</dbReference>
<dbReference type="RefSeq" id="XP_006520686.1">
    <property type="nucleotide sequence ID" value="XM_006520623.5"/>
</dbReference>
<dbReference type="RefSeq" id="XP_011243818.1">
    <property type="nucleotide sequence ID" value="XM_011245516.4"/>
</dbReference>
<dbReference type="RefSeq" id="XP_011243819.1">
    <property type="nucleotide sequence ID" value="XM_011245517.4"/>
</dbReference>
<dbReference type="RefSeq" id="XP_011243821.1">
    <property type="nucleotide sequence ID" value="XM_011245519.4"/>
</dbReference>
<dbReference type="SMR" id="P23204"/>
<dbReference type="BioGRID" id="202317">
    <property type="interactions" value="19"/>
</dbReference>
<dbReference type="CORUM" id="P23204"/>
<dbReference type="DIP" id="DIP-5958N"/>
<dbReference type="FunCoup" id="P23204">
    <property type="interactions" value="2201"/>
</dbReference>
<dbReference type="IntAct" id="P23204">
    <property type="interactions" value="5"/>
</dbReference>
<dbReference type="MINT" id="P23204"/>
<dbReference type="STRING" id="10090.ENSMUSP00000105049"/>
<dbReference type="BindingDB" id="P23204"/>
<dbReference type="ChEMBL" id="CHEMBL2128"/>
<dbReference type="DrugCentral" id="P23204"/>
<dbReference type="GuidetoPHARMACOLOGY" id="593"/>
<dbReference type="iPTMnet" id="P23204"/>
<dbReference type="PhosphoSitePlus" id="P23204"/>
<dbReference type="PaxDb" id="10090-ENSMUSP00000105049"/>
<dbReference type="ProteomicsDB" id="289733"/>
<dbReference type="Antibodypedia" id="13823">
    <property type="antibodies" value="803 antibodies from 39 providers"/>
</dbReference>
<dbReference type="DNASU" id="19013"/>
<dbReference type="Ensembl" id="ENSMUST00000057979.6">
    <property type="protein sequence ID" value="ENSMUSP00000059719.6"/>
    <property type="gene ID" value="ENSMUSG00000022383.14"/>
</dbReference>
<dbReference type="Ensembl" id="ENSMUST00000109422.8">
    <property type="protein sequence ID" value="ENSMUSP00000105049.2"/>
    <property type="gene ID" value="ENSMUSG00000022383.14"/>
</dbReference>
<dbReference type="Ensembl" id="ENSMUST00000109423.8">
    <property type="protein sequence ID" value="ENSMUSP00000105050.2"/>
    <property type="gene ID" value="ENSMUSG00000022383.14"/>
</dbReference>
<dbReference type="GeneID" id="19013"/>
<dbReference type="KEGG" id="mmu:19013"/>
<dbReference type="UCSC" id="uc007xdj.2">
    <property type="organism name" value="mouse"/>
</dbReference>
<dbReference type="AGR" id="MGI:104740"/>
<dbReference type="CTD" id="5465"/>
<dbReference type="MGI" id="MGI:104740">
    <property type="gene designation" value="Ppara"/>
</dbReference>
<dbReference type="VEuPathDB" id="HostDB:ENSMUSG00000022383"/>
<dbReference type="eggNOG" id="KOG3575">
    <property type="taxonomic scope" value="Eukaryota"/>
</dbReference>
<dbReference type="GeneTree" id="ENSGT00940000157097"/>
<dbReference type="HOGENOM" id="CLU_007368_4_1_1"/>
<dbReference type="InParanoid" id="P23204"/>
<dbReference type="OMA" id="TNHPDNI"/>
<dbReference type="OrthoDB" id="7634782at2759"/>
<dbReference type="PhylomeDB" id="P23204"/>
<dbReference type="TreeFam" id="TF316304"/>
<dbReference type="Reactome" id="R-MMU-383280">
    <property type="pathway name" value="Nuclear Receptor transcription pathway"/>
</dbReference>
<dbReference type="Reactome" id="R-MMU-400206">
    <property type="pathway name" value="Regulation of lipid metabolism by PPARalpha"/>
</dbReference>
<dbReference type="Reactome" id="R-MMU-4090294">
    <property type="pathway name" value="SUMOylation of intracellular receptors"/>
</dbReference>
<dbReference type="Reactome" id="R-MMU-9707564">
    <property type="pathway name" value="Cytoprotection by HMOX1"/>
</dbReference>
<dbReference type="BioGRID-ORCS" id="19013">
    <property type="hits" value="5 hits in 82 CRISPR screens"/>
</dbReference>
<dbReference type="ChiTaRS" id="Ppara">
    <property type="organism name" value="mouse"/>
</dbReference>
<dbReference type="PRO" id="PR:P23204"/>
<dbReference type="Proteomes" id="UP000000589">
    <property type="component" value="Chromosome 15"/>
</dbReference>
<dbReference type="RNAct" id="P23204">
    <property type="molecule type" value="protein"/>
</dbReference>
<dbReference type="Bgee" id="ENSMUSG00000022383">
    <property type="expression patterns" value="Expressed in left lobe of liver and 112 other cell types or tissues"/>
</dbReference>
<dbReference type="ExpressionAtlas" id="P23204">
    <property type="expression patterns" value="baseline and differential"/>
</dbReference>
<dbReference type="GO" id="GO:0005654">
    <property type="term" value="C:nucleoplasm"/>
    <property type="evidence" value="ECO:0000304"/>
    <property type="project" value="Reactome"/>
</dbReference>
<dbReference type="GO" id="GO:0005634">
    <property type="term" value="C:nucleus"/>
    <property type="evidence" value="ECO:0000304"/>
    <property type="project" value="MGI"/>
</dbReference>
<dbReference type="GO" id="GO:0001228">
    <property type="term" value="F:DNA-binding transcription activator activity, RNA polymerase II-specific"/>
    <property type="evidence" value="ECO:0007669"/>
    <property type="project" value="Ensembl"/>
</dbReference>
<dbReference type="GO" id="GO:0003700">
    <property type="term" value="F:DNA-binding transcription factor activity"/>
    <property type="evidence" value="ECO:0000315"/>
    <property type="project" value="UniProtKB"/>
</dbReference>
<dbReference type="GO" id="GO:0001227">
    <property type="term" value="F:DNA-binding transcription repressor activity, RNA polymerase II-specific"/>
    <property type="evidence" value="ECO:0007669"/>
    <property type="project" value="Ensembl"/>
</dbReference>
<dbReference type="GO" id="GO:0008289">
    <property type="term" value="F:lipid binding"/>
    <property type="evidence" value="ECO:0000314"/>
    <property type="project" value="UniProtKB"/>
</dbReference>
<dbReference type="GO" id="GO:0097371">
    <property type="term" value="F:MDM2/MDM4 family protein binding"/>
    <property type="evidence" value="ECO:0007669"/>
    <property type="project" value="Ensembl"/>
</dbReference>
<dbReference type="GO" id="GO:0031435">
    <property type="term" value="F:mitogen-activated protein kinase kinase kinase binding"/>
    <property type="evidence" value="ECO:0007669"/>
    <property type="project" value="Ensembl"/>
</dbReference>
<dbReference type="GO" id="GO:0051525">
    <property type="term" value="F:NFAT protein binding"/>
    <property type="evidence" value="ECO:0007669"/>
    <property type="project" value="Ensembl"/>
</dbReference>
<dbReference type="GO" id="GO:0004879">
    <property type="term" value="F:nuclear receptor activity"/>
    <property type="evidence" value="ECO:0000314"/>
    <property type="project" value="UniProtKB"/>
</dbReference>
<dbReference type="GO" id="GO:0003707">
    <property type="term" value="F:nuclear steroid receptor activity"/>
    <property type="evidence" value="ECO:0000304"/>
    <property type="project" value="MGI"/>
</dbReference>
<dbReference type="GO" id="GO:0019902">
    <property type="term" value="F:phosphatase binding"/>
    <property type="evidence" value="ECO:0007669"/>
    <property type="project" value="Ensembl"/>
</dbReference>
<dbReference type="GO" id="GO:0019904">
    <property type="term" value="F:protein domain specific binding"/>
    <property type="evidence" value="ECO:0007669"/>
    <property type="project" value="Ensembl"/>
</dbReference>
<dbReference type="GO" id="GO:0044877">
    <property type="term" value="F:protein-containing complex binding"/>
    <property type="evidence" value="ECO:0007669"/>
    <property type="project" value="Ensembl"/>
</dbReference>
<dbReference type="GO" id="GO:0000978">
    <property type="term" value="F:RNA polymerase II cis-regulatory region sequence-specific DNA binding"/>
    <property type="evidence" value="ECO:0000314"/>
    <property type="project" value="MGI"/>
</dbReference>
<dbReference type="GO" id="GO:0043565">
    <property type="term" value="F:sequence-specific DNA binding"/>
    <property type="evidence" value="ECO:0000314"/>
    <property type="project" value="UniProtKB"/>
</dbReference>
<dbReference type="GO" id="GO:0038023">
    <property type="term" value="F:signaling receptor activity"/>
    <property type="evidence" value="ECO:0000314"/>
    <property type="project" value="MGI"/>
</dbReference>
<dbReference type="GO" id="GO:0001223">
    <property type="term" value="F:transcription coactivator binding"/>
    <property type="evidence" value="ECO:0007669"/>
    <property type="project" value="Ensembl"/>
</dbReference>
<dbReference type="GO" id="GO:0031624">
    <property type="term" value="F:ubiquitin conjugating enzyme binding"/>
    <property type="evidence" value="ECO:0007669"/>
    <property type="project" value="Ensembl"/>
</dbReference>
<dbReference type="GO" id="GO:0008270">
    <property type="term" value="F:zinc ion binding"/>
    <property type="evidence" value="ECO:0007669"/>
    <property type="project" value="UniProtKB-KW"/>
</dbReference>
<dbReference type="GO" id="GO:0035095">
    <property type="term" value="P:behavioral response to nicotine"/>
    <property type="evidence" value="ECO:0007669"/>
    <property type="project" value="Ensembl"/>
</dbReference>
<dbReference type="GO" id="GO:0071332">
    <property type="term" value="P:cellular response to fructose stimulus"/>
    <property type="evidence" value="ECO:0007669"/>
    <property type="project" value="Ensembl"/>
</dbReference>
<dbReference type="GO" id="GO:0009267">
    <property type="term" value="P:cellular response to starvation"/>
    <property type="evidence" value="ECO:0000315"/>
    <property type="project" value="ARUK-UCL"/>
</dbReference>
<dbReference type="GO" id="GO:0032922">
    <property type="term" value="P:circadian regulation of gene expression"/>
    <property type="evidence" value="ECO:0000314"/>
    <property type="project" value="UniProtKB"/>
</dbReference>
<dbReference type="GO" id="GO:0070166">
    <property type="term" value="P:enamel mineralization"/>
    <property type="evidence" value="ECO:0000315"/>
    <property type="project" value="MGI"/>
</dbReference>
<dbReference type="GO" id="GO:0008544">
    <property type="term" value="P:epidermis development"/>
    <property type="evidence" value="ECO:0000315"/>
    <property type="project" value="MGI"/>
</dbReference>
<dbReference type="GO" id="GO:0006631">
    <property type="term" value="P:fatty acid metabolic process"/>
    <property type="evidence" value="ECO:0000315"/>
    <property type="project" value="MGI"/>
</dbReference>
<dbReference type="GO" id="GO:0010467">
    <property type="term" value="P:gene expression"/>
    <property type="evidence" value="ECO:0000314"/>
    <property type="project" value="MGI"/>
</dbReference>
<dbReference type="GO" id="GO:0006094">
    <property type="term" value="P:gluconeogenesis"/>
    <property type="evidence" value="ECO:0000315"/>
    <property type="project" value="MGI"/>
</dbReference>
<dbReference type="GO" id="GO:0006006">
    <property type="term" value="P:glucose metabolic process"/>
    <property type="evidence" value="ECO:0000304"/>
    <property type="project" value="MGI"/>
</dbReference>
<dbReference type="GO" id="GO:0007507">
    <property type="term" value="P:heart development"/>
    <property type="evidence" value="ECO:0007669"/>
    <property type="project" value="Ensembl"/>
</dbReference>
<dbReference type="GO" id="GO:0006629">
    <property type="term" value="P:lipid metabolic process"/>
    <property type="evidence" value="ECO:0000315"/>
    <property type="project" value="MGI"/>
</dbReference>
<dbReference type="GO" id="GO:0042157">
    <property type="term" value="P:lipoprotein metabolic process"/>
    <property type="evidence" value="ECO:0007669"/>
    <property type="project" value="Ensembl"/>
</dbReference>
<dbReference type="GO" id="GO:0032099">
    <property type="term" value="P:negative regulation of appetite"/>
    <property type="evidence" value="ECO:0000315"/>
    <property type="project" value="UniProtKB"/>
</dbReference>
<dbReference type="GO" id="GO:0045776">
    <property type="term" value="P:negative regulation of blood pressure"/>
    <property type="evidence" value="ECO:0007669"/>
    <property type="project" value="Ensembl"/>
</dbReference>
<dbReference type="GO" id="GO:0061052">
    <property type="term" value="P:negative regulation of cell growth involved in cardiac muscle cell development"/>
    <property type="evidence" value="ECO:0007669"/>
    <property type="project" value="Ensembl"/>
</dbReference>
<dbReference type="GO" id="GO:0010887">
    <property type="term" value="P:negative regulation of cholesterol storage"/>
    <property type="evidence" value="ECO:0007669"/>
    <property type="project" value="Ensembl"/>
</dbReference>
<dbReference type="GO" id="GO:1900016">
    <property type="term" value="P:negative regulation of cytokine production involved in inflammatory response"/>
    <property type="evidence" value="ECO:0007669"/>
    <property type="project" value="Ensembl"/>
</dbReference>
<dbReference type="GO" id="GO:0045820">
    <property type="term" value="P:negative regulation of glycolytic process"/>
    <property type="evidence" value="ECO:0007669"/>
    <property type="project" value="Ensembl"/>
</dbReference>
<dbReference type="GO" id="GO:1903944">
    <property type="term" value="P:negative regulation of hepatocyte apoptotic process"/>
    <property type="evidence" value="ECO:0007669"/>
    <property type="project" value="Ensembl"/>
</dbReference>
<dbReference type="GO" id="GO:0050728">
    <property type="term" value="P:negative regulation of inflammatory response"/>
    <property type="evidence" value="ECO:0007669"/>
    <property type="project" value="Ensembl"/>
</dbReference>
<dbReference type="GO" id="GO:1903038">
    <property type="term" value="P:negative regulation of leukocyte cell-cell adhesion"/>
    <property type="evidence" value="ECO:0007669"/>
    <property type="project" value="Ensembl"/>
</dbReference>
<dbReference type="GO" id="GO:0010745">
    <property type="term" value="P:negative regulation of macrophage derived foam cell differentiation"/>
    <property type="evidence" value="ECO:0007669"/>
    <property type="project" value="Ensembl"/>
</dbReference>
<dbReference type="GO" id="GO:1902894">
    <property type="term" value="P:negative regulation of miRNA transcription"/>
    <property type="evidence" value="ECO:0007669"/>
    <property type="project" value="Ensembl"/>
</dbReference>
<dbReference type="GO" id="GO:0051898">
    <property type="term" value="P:negative regulation of phosphatidylinositol 3-kinase/protein kinase B signal transduction"/>
    <property type="evidence" value="ECO:0007669"/>
    <property type="project" value="Ensembl"/>
</dbReference>
<dbReference type="GO" id="GO:1903427">
    <property type="term" value="P:negative regulation of reactive oxygen species biosynthetic process"/>
    <property type="evidence" value="ECO:0007669"/>
    <property type="project" value="Ensembl"/>
</dbReference>
<dbReference type="GO" id="GO:0030512">
    <property type="term" value="P:negative regulation of transforming growth factor beta receptor signaling pathway"/>
    <property type="evidence" value="ECO:0007669"/>
    <property type="project" value="Ensembl"/>
</dbReference>
<dbReference type="GO" id="GO:0046209">
    <property type="term" value="P:nitric oxide metabolic process"/>
    <property type="evidence" value="ECO:0007669"/>
    <property type="project" value="Ensembl"/>
</dbReference>
<dbReference type="GO" id="GO:0035357">
    <property type="term" value="P:peroxisome proliferator activated receptor signaling pathway"/>
    <property type="evidence" value="ECO:0000314"/>
    <property type="project" value="UniProtKB"/>
</dbReference>
<dbReference type="GO" id="GO:2001171">
    <property type="term" value="P:positive regulation of ATP biosynthetic process"/>
    <property type="evidence" value="ECO:0007669"/>
    <property type="project" value="Ensembl"/>
</dbReference>
<dbReference type="GO" id="GO:0045893">
    <property type="term" value="P:positive regulation of DNA-templated transcription"/>
    <property type="evidence" value="ECO:0000315"/>
    <property type="project" value="UniProtKB"/>
</dbReference>
<dbReference type="GO" id="GO:0046321">
    <property type="term" value="P:positive regulation of fatty acid oxidation"/>
    <property type="evidence" value="ECO:0000315"/>
    <property type="project" value="BHF-UCL"/>
</dbReference>
<dbReference type="GO" id="GO:0045722">
    <property type="term" value="P:positive regulation of gluconeogenesis"/>
    <property type="evidence" value="ECO:0000315"/>
    <property type="project" value="MGI"/>
</dbReference>
<dbReference type="GO" id="GO:0046889">
    <property type="term" value="P:positive regulation of lipid biosynthetic process"/>
    <property type="evidence" value="ECO:0007669"/>
    <property type="project" value="Ensembl"/>
</dbReference>
<dbReference type="GO" id="GO:0045944">
    <property type="term" value="P:positive regulation of transcription by RNA polymerase II"/>
    <property type="evidence" value="ECO:0000314"/>
    <property type="project" value="MGI"/>
</dbReference>
<dbReference type="GO" id="GO:1904189">
    <property type="term" value="P:positive regulation of transformation of host cell by virus"/>
    <property type="evidence" value="ECO:0007669"/>
    <property type="project" value="Ensembl"/>
</dbReference>
<dbReference type="GO" id="GO:0042752">
    <property type="term" value="P:regulation of circadian rhythm"/>
    <property type="evidence" value="ECO:0000314"/>
    <property type="project" value="UniProtKB"/>
</dbReference>
<dbReference type="GO" id="GO:0006355">
    <property type="term" value="P:regulation of DNA-templated transcription"/>
    <property type="evidence" value="ECO:0000304"/>
    <property type="project" value="MGI"/>
</dbReference>
<dbReference type="GO" id="GO:0010468">
    <property type="term" value="P:regulation of gene expression"/>
    <property type="evidence" value="ECO:0000315"/>
    <property type="project" value="MGI"/>
</dbReference>
<dbReference type="GO" id="GO:0045471">
    <property type="term" value="P:response to ethanol"/>
    <property type="evidence" value="ECO:0007669"/>
    <property type="project" value="Ensembl"/>
</dbReference>
<dbReference type="GO" id="GO:0001666">
    <property type="term" value="P:response to hypoxia"/>
    <property type="evidence" value="ECO:0007669"/>
    <property type="project" value="Ensembl"/>
</dbReference>
<dbReference type="GO" id="GO:0032868">
    <property type="term" value="P:response to insulin"/>
    <property type="evidence" value="ECO:0007669"/>
    <property type="project" value="Ensembl"/>
</dbReference>
<dbReference type="GO" id="GO:0007584">
    <property type="term" value="P:response to nutrient"/>
    <property type="evidence" value="ECO:0007669"/>
    <property type="project" value="Ensembl"/>
</dbReference>
<dbReference type="GO" id="GO:0042060">
    <property type="term" value="P:wound healing"/>
    <property type="evidence" value="ECO:0000315"/>
    <property type="project" value="MGI"/>
</dbReference>
<dbReference type="CDD" id="cd06965">
    <property type="entry name" value="NR_DBD_Ppar"/>
    <property type="match status" value="1"/>
</dbReference>
<dbReference type="CDD" id="cd06932">
    <property type="entry name" value="NR_LBD_PPAR"/>
    <property type="match status" value="1"/>
</dbReference>
<dbReference type="FunFam" id="1.10.565.10:FF:000013">
    <property type="entry name" value="Peroxisome proliferator-activated receptor delta"/>
    <property type="match status" value="1"/>
</dbReference>
<dbReference type="FunFam" id="3.30.50.10:FF:000010">
    <property type="entry name" value="Peroxisome proliferator-activated receptor gamma"/>
    <property type="match status" value="1"/>
</dbReference>
<dbReference type="Gene3D" id="3.30.50.10">
    <property type="entry name" value="Erythroid Transcription Factor GATA-1, subunit A"/>
    <property type="match status" value="1"/>
</dbReference>
<dbReference type="Gene3D" id="1.10.565.10">
    <property type="entry name" value="Retinoid X Receptor"/>
    <property type="match status" value="1"/>
</dbReference>
<dbReference type="InterPro" id="IPR003074">
    <property type="entry name" value="1Cnucl_rcpt"/>
</dbReference>
<dbReference type="InterPro" id="IPR035500">
    <property type="entry name" value="NHR-like_dom_sf"/>
</dbReference>
<dbReference type="InterPro" id="IPR000536">
    <property type="entry name" value="Nucl_hrmn_rcpt_lig-bd"/>
</dbReference>
<dbReference type="InterPro" id="IPR050234">
    <property type="entry name" value="Nuclear_hormone_rcpt_NR1"/>
</dbReference>
<dbReference type="InterPro" id="IPR001723">
    <property type="entry name" value="Nuclear_hrmn_rcpt"/>
</dbReference>
<dbReference type="InterPro" id="IPR003076">
    <property type="entry name" value="PPAR-alpha"/>
</dbReference>
<dbReference type="InterPro" id="IPR001628">
    <property type="entry name" value="Znf_hrmn_rcpt"/>
</dbReference>
<dbReference type="InterPro" id="IPR013088">
    <property type="entry name" value="Znf_NHR/GATA"/>
</dbReference>
<dbReference type="PANTHER" id="PTHR24082">
    <property type="entry name" value="NUCLEAR HORMONE RECEPTOR"/>
    <property type="match status" value="1"/>
</dbReference>
<dbReference type="PANTHER" id="PTHR24082:SF197">
    <property type="entry name" value="PEROXISOME PROLIFERATOR-ACTIVATED RECEPTOR ALPHA"/>
    <property type="match status" value="1"/>
</dbReference>
<dbReference type="Pfam" id="PF00104">
    <property type="entry name" value="Hormone_recep"/>
    <property type="match status" value="1"/>
</dbReference>
<dbReference type="Pfam" id="PF00105">
    <property type="entry name" value="zf-C4"/>
    <property type="match status" value="1"/>
</dbReference>
<dbReference type="PRINTS" id="PR01288">
    <property type="entry name" value="PROXISOMEPAR"/>
</dbReference>
<dbReference type="PRINTS" id="PR01289">
    <property type="entry name" value="PROXISOMPAAR"/>
</dbReference>
<dbReference type="PRINTS" id="PR00398">
    <property type="entry name" value="STRDHORMONER"/>
</dbReference>
<dbReference type="PRINTS" id="PR00047">
    <property type="entry name" value="STROIDFINGER"/>
</dbReference>
<dbReference type="SMART" id="SM00430">
    <property type="entry name" value="HOLI"/>
    <property type="match status" value="1"/>
</dbReference>
<dbReference type="SMART" id="SM00399">
    <property type="entry name" value="ZnF_C4"/>
    <property type="match status" value="1"/>
</dbReference>
<dbReference type="SUPFAM" id="SSF57716">
    <property type="entry name" value="Glucocorticoid receptor-like (DNA-binding domain)"/>
    <property type="match status" value="1"/>
</dbReference>
<dbReference type="SUPFAM" id="SSF48508">
    <property type="entry name" value="Nuclear receptor ligand-binding domain"/>
    <property type="match status" value="1"/>
</dbReference>
<dbReference type="PROSITE" id="PS51843">
    <property type="entry name" value="NR_LBD"/>
    <property type="match status" value="1"/>
</dbReference>
<dbReference type="PROSITE" id="PS00031">
    <property type="entry name" value="NUCLEAR_REC_DBD_1"/>
    <property type="match status" value="1"/>
</dbReference>
<dbReference type="PROSITE" id="PS51030">
    <property type="entry name" value="NUCLEAR_REC_DBD_2"/>
    <property type="match status" value="1"/>
</dbReference>
<comment type="function">
    <text evidence="7 10 11">Ligand-activated transcription factor. Key regulator of lipid metabolism. Activated by the endogenous ligand 1-palmitoyl-2-oleoyl-sn-glycerol-3-phosphocholine (16:0/18:1-GPC). Activated by oleylethanolamide, a naturally occurring lipid that regulates satiety. Receptor for peroxisome proliferators such as hypolipidemic drugs and fatty acids. Regulates the peroxisomal beta-oxidation pathway of fatty acids. Functions as a transcription activator for the ACOX1 and P450 genes. Transactivation activity requires heterodimerization with RXRA and is antagonized by NR2C2. May be required for the propagation of clock information to metabolic pathways regulated by PER2.</text>
</comment>
<comment type="subunit">
    <text evidence="3 6 8 9 11 12 13 14 15">Heterodimer; with RXRA. This heterodimerization is required for DNA binding and transactivation activity. Interacts with NCOA3 coactivator. Interacts with CITED2; the interaction stimulates its transcriptional activity. Also interacts with PPARBP in vitro. Interacts with AKAP13, LPIN1, PRDM16 and coactivator NCOA6. Interacts with ASXL1 and ASXL2. Interacts with PER2. Interacts with SIRT1; the interaction seems to be modulated by NAD(+) levels (By similarity). Interacts with CRY1 and CRY2 (PubMed:28683290). In hepatocytes, interacts with PAQR3 and HUWE1; the interactions promote PPARA poylubiquitination and HUWE1-mediated degradation (PubMed:29331071).</text>
</comment>
<comment type="interaction">
    <interactant intactId="EBI-5273083">
        <id>P23204</id>
    </interactant>
    <interactant intactId="EBI-3990176">
        <id>O88559</id>
        <label>Men1</label>
    </interactant>
    <organismsDiffer>false</organismsDiffer>
    <experiments>2</experiments>
</comment>
<comment type="subcellular location">
    <subcellularLocation>
        <location evidence="4 11">Nucleus</location>
    </subcellularLocation>
</comment>
<comment type="tissue specificity">
    <text>Highly expressed in liver, kidney and heart. Very weakly expressed in brain and testis.</text>
</comment>
<comment type="developmental stage">
    <text>It appears first at 13.5 dpc and increases until birth.</text>
</comment>
<comment type="PTM">
    <text evidence="12">Ubiquitinated by E3 ubiquitin-protein ligase HUWE1; leading to proteasomal degradation.</text>
</comment>
<comment type="PTM">
    <text evidence="2">Phosphorylated.</text>
</comment>
<comment type="disease">
    <text>Peroxisome proliferators are a diverse group of chemicals that include hypolipidaemic drugs, herbicides and industrial plasticisers. Administration of these chemicals to rodents results in the dramatic proliferation of hepatic peroxisomes as well as liver hyperplasia.</text>
</comment>
<comment type="similarity">
    <text evidence="16">Belongs to the nuclear hormone receptor family. NR1 subfamily.</text>
</comment>
<protein>
    <recommendedName>
        <fullName>Peroxisome proliferator-activated receptor alpha</fullName>
        <shortName>PPAR-alpha</shortName>
    </recommendedName>
    <alternativeName>
        <fullName>Nuclear receptor subfamily 1 group C member 1</fullName>
    </alternativeName>
</protein>
<keyword id="KW-0010">Activator</keyword>
<keyword id="KW-0090">Biological rhythms</keyword>
<keyword id="KW-0238">DNA-binding</keyword>
<keyword id="KW-0446">Lipid-binding</keyword>
<keyword id="KW-0479">Metal-binding</keyword>
<keyword id="KW-0539">Nucleus</keyword>
<keyword id="KW-0675">Receptor</keyword>
<keyword id="KW-1185">Reference proteome</keyword>
<keyword id="KW-0804">Transcription</keyword>
<keyword id="KW-0805">Transcription regulation</keyword>
<keyword id="KW-0832">Ubl conjugation</keyword>
<keyword id="KW-0862">Zinc</keyword>
<keyword id="KW-0863">Zinc-finger</keyword>
<organism>
    <name type="scientific">Mus musculus</name>
    <name type="common">Mouse</name>
    <dbReference type="NCBI Taxonomy" id="10090"/>
    <lineage>
        <taxon>Eukaryota</taxon>
        <taxon>Metazoa</taxon>
        <taxon>Chordata</taxon>
        <taxon>Craniata</taxon>
        <taxon>Vertebrata</taxon>
        <taxon>Euteleostomi</taxon>
        <taxon>Mammalia</taxon>
        <taxon>Eutheria</taxon>
        <taxon>Euarchontoglires</taxon>
        <taxon>Glires</taxon>
        <taxon>Rodentia</taxon>
        <taxon>Myomorpha</taxon>
        <taxon>Muroidea</taxon>
        <taxon>Muridae</taxon>
        <taxon>Murinae</taxon>
        <taxon>Mus</taxon>
        <taxon>Mus</taxon>
    </lineage>
</organism>
<sequence length="468" mass="52347">MVDTESPICPLSPLEADDLESPLSEEFLQEMGNIQEISQSIGEESSGSFGFADYQYLGSCPGSEGSVITDTLSPASSPSSVSCPVIPASTDESPGSALNIECRICGDKASGYHYGVHACEGCKGFFRRTIRLKLVYDKCDRSCKIQKKNRNKCQYCRFHKCLSVGMSHNAIRFGRMPRSEKAKLKAEILTCEHDLKDSETADLKSLGKRIHEAYLKNFNMNKVKARVILAGKTSNNPPFVIHDMETLCMAEKTLVAKMVANGVEDKEAEVRFFHCCQCMSVETVTELTEFAKAIPGFANLDLNDQVTLLKYGVYEAIFTMLSSLMNKDGMLIAYGNGFITREFLKNLRKPFCDIMEPKFDFAMKFNALELDDSDISLFVAAIICCGDRPGLLNIGYIEKLQEGIVHVLKLHLQSNHPDDTFLFPKLLQKMVDLRQLVTEHAQLVQVIKKTESDAALHPLLQEIYRDMY</sequence>